<accession>A0A067EES0</accession>
<evidence type="ECO:0000250" key="1">
    <source>
        <dbReference type="UniProtKB" id="Q70PR7"/>
    </source>
</evidence>
<evidence type="ECO:0000269" key="2">
    <source>
    </source>
</evidence>
<evidence type="ECO:0000303" key="3">
    <source>
    </source>
</evidence>
<evidence type="ECO:0000305" key="4"/>
<evidence type="ECO:0000312" key="5">
    <source>
        <dbReference type="EMBL" id="KDO53588.1"/>
    </source>
</evidence>
<proteinExistence type="evidence at protein level"/>
<gene>
    <name evidence="3" type="primary">L21AT</name>
    <name evidence="5" type="ORF">CISIN_1g048249mg</name>
</gene>
<sequence>MDLQITCTEIIKPSSPTPQHQSTYKLSIIDQLTPNVYFSIILLYSNAGESTAKTSDHLKKSLSNTLTHYYPLAGQLKYDQLIVDCNDQGVPFIEAHVANDMRQLLKIPNIDVLEQLLPFKPHEGFDSDRSNLTLQVNYFGCGGMAIGLCFRHKVIDATTAAFFVKNWGVIARGAGEIKDLIIDHASLFPARDLSCLAKSVDEEFLKPESETKRFVFDGPTIASFQETFTSFERRPTRFEVVSAVILGALITATRESDDESNVPERLDTIISVNLRQRMNPPFPEHCMGNIISGGLVYWPLEKKVDYGCLAKEIHESIKKVDDQFARKFYGDAEFLNLPRLAGAEDVKKREFWVTSWCKTPLYEADFGWGNPKWAGNSMRLNQITVFFDSSDGEGVEAWVGLPRKDMARFEKDSGILAYTSPNPSIF</sequence>
<dbReference type="EC" id="2.1.1.-" evidence="2"/>
<dbReference type="EMBL" id="OQ091241">
    <property type="protein sequence ID" value="WCJ12486.1"/>
    <property type="molecule type" value="mRNA"/>
</dbReference>
<dbReference type="EMBL" id="KK785010">
    <property type="protein sequence ID" value="KDO53588.1"/>
    <property type="molecule type" value="Genomic_DNA"/>
</dbReference>
<dbReference type="SMR" id="A0A067EES0"/>
<dbReference type="PaxDb" id="2711-XP_006482086-1"/>
<dbReference type="eggNOG" id="ENOG502QSKU">
    <property type="taxonomic scope" value="Eukaryota"/>
</dbReference>
<dbReference type="UniPathway" id="UPA00213"/>
<dbReference type="Proteomes" id="UP000027120">
    <property type="component" value="Unassembled WGS sequence"/>
</dbReference>
<dbReference type="GO" id="GO:0016746">
    <property type="term" value="F:acyltransferase activity"/>
    <property type="evidence" value="ECO:0007669"/>
    <property type="project" value="UniProtKB-KW"/>
</dbReference>
<dbReference type="GO" id="GO:0016491">
    <property type="term" value="F:oxidoreductase activity"/>
    <property type="evidence" value="ECO:0007669"/>
    <property type="project" value="UniProtKB-KW"/>
</dbReference>
<dbReference type="Gene3D" id="3.30.559.10">
    <property type="entry name" value="Chloramphenicol acetyltransferase-like domain"/>
    <property type="match status" value="2"/>
</dbReference>
<dbReference type="InterPro" id="IPR023213">
    <property type="entry name" value="CAT-like_dom_sf"/>
</dbReference>
<dbReference type="PANTHER" id="PTHR31623:SF28">
    <property type="entry name" value="BAHD ACYLTRANSFERASE"/>
    <property type="match status" value="1"/>
</dbReference>
<dbReference type="PANTHER" id="PTHR31623">
    <property type="entry name" value="F21J9.9"/>
    <property type="match status" value="1"/>
</dbReference>
<dbReference type="Pfam" id="PF02458">
    <property type="entry name" value="Transferase"/>
    <property type="match status" value="1"/>
</dbReference>
<dbReference type="SUPFAM" id="SSF52777">
    <property type="entry name" value="CoA-dependent acyltransferases"/>
    <property type="match status" value="1"/>
</dbReference>
<reference key="1">
    <citation type="journal article" date="2023" name="Science">
        <title>Complex scaffold remodeling in plant triterpene biosynthesis.</title>
        <authorList>
            <person name="De La Pena R."/>
            <person name="Hodgson H."/>
            <person name="Liu J.C."/>
            <person name="Stephenson M.J."/>
            <person name="Martin A.C."/>
            <person name="Owen C."/>
            <person name="Harkess A."/>
            <person name="Leebens-Mack J."/>
            <person name="Jimenez L.E."/>
            <person name="Osbourn A."/>
            <person name="Sattely E.S."/>
        </authorList>
    </citation>
    <scope>NUCLEOTIDE SEQUENCE [MRNA]</scope>
    <scope>FUNCTION</scope>
    <scope>CATALYTIC ACTIVITY</scope>
    <scope>PATHWAY</scope>
    <scope>TISSUE SPECIFICITY</scope>
    <source>
        <strain>cv. Valencia</strain>
    </source>
</reference>
<reference key="2">
    <citation type="submission" date="2014-04" db="EMBL/GenBank/DDBJ databases">
        <authorList>
            <consortium name="International Citrus Genome Consortium"/>
            <person name="Gmitter F."/>
            <person name="Chen C."/>
            <person name="Farmerie W."/>
            <person name="Harkins T."/>
            <person name="Desany B."/>
            <person name="Mohiuddin M."/>
            <person name="Kodira C."/>
            <person name="Borodovsky M."/>
            <person name="Lomsadze A."/>
            <person name="Burns P."/>
            <person name="Jenkins J."/>
            <person name="Prochnik S."/>
            <person name="Shu S."/>
            <person name="Chapman J."/>
            <person name="Pitluck S."/>
            <person name="Schmutz J."/>
            <person name="Rokhsar D."/>
        </authorList>
    </citation>
    <scope>NUCLEOTIDE SEQUENCE [LARGE SCALE GENOMIC DNA]</scope>
    <source>
        <strain>cv. Ridge Pineapple sweet orange</strain>
    </source>
</reference>
<organism>
    <name type="scientific">Citrus sinensis</name>
    <name type="common">Sweet orange</name>
    <name type="synonym">Citrus aurantium var. sinensis</name>
    <dbReference type="NCBI Taxonomy" id="2711"/>
    <lineage>
        <taxon>Eukaryota</taxon>
        <taxon>Viridiplantae</taxon>
        <taxon>Streptophyta</taxon>
        <taxon>Embryophyta</taxon>
        <taxon>Tracheophyta</taxon>
        <taxon>Spermatophyta</taxon>
        <taxon>Magnoliopsida</taxon>
        <taxon>eudicotyledons</taxon>
        <taxon>Gunneridae</taxon>
        <taxon>Pentapetalae</taxon>
        <taxon>rosids</taxon>
        <taxon>malvids</taxon>
        <taxon>Sapindales</taxon>
        <taxon>Rutaceae</taxon>
        <taxon>Aurantioideae</taxon>
        <taxon>Citrus</taxon>
    </lineage>
</organism>
<name>L21AT_CITSI</name>
<comment type="function">
    <text evidence="2">Acetyltransferase involved in the biosynthesis of limonoids triterpene natural products such as limonin, a compound with insecticidal activity responsible for the bitter taste in citrus (PubMed:36701471). Catalyzes the formation of 21-O-acetyl-isomeliandiol from isomeliandiol (PubMed:36701471).</text>
</comment>
<comment type="catalytic activity">
    <reaction evidence="2">
        <text>isomeliandiol + acetyl-CoA = 21-O-acetyl-isomeliandiol + CoA</text>
        <dbReference type="Rhea" id="RHEA:80303"/>
        <dbReference type="ChEBI" id="CHEBI:57287"/>
        <dbReference type="ChEBI" id="CHEBI:57288"/>
        <dbReference type="ChEBI" id="CHEBI:231453"/>
        <dbReference type="ChEBI" id="CHEBI:231455"/>
    </reaction>
    <physiologicalReaction direction="left-to-right" evidence="2">
        <dbReference type="Rhea" id="RHEA:80304"/>
    </physiologicalReaction>
</comment>
<comment type="pathway">
    <text evidence="2">Secondary metabolite biosynthesis; terpenoid biosynthesis.</text>
</comment>
<comment type="subunit">
    <text evidence="1">Monomer.</text>
</comment>
<comment type="tissue specificity">
    <text evidence="2">Expressed in maturing fruits and in juice vesicles.</text>
</comment>
<comment type="similarity">
    <text evidence="4">Belongs to the plant acyltransferase family.</text>
</comment>
<keyword id="KW-0012">Acyltransferase</keyword>
<keyword id="KW-1185">Reference proteome</keyword>
<keyword id="KW-0808">Transferase</keyword>
<protein>
    <recommendedName>
        <fullName evidence="3">Limonoid 21-O-acetyltransferse</fullName>
        <shortName evidence="3">CsL21AT</shortName>
        <ecNumber evidence="2">2.1.1.-</ecNumber>
    </recommendedName>
</protein>
<feature type="chain" id="PRO_0000461342" description="Limonoid 21-O-acetyltransferse">
    <location>
        <begin position="1"/>
        <end position="426"/>
    </location>
</feature>
<feature type="active site" description="Proton acceptor" evidence="1">
    <location>
        <position position="152"/>
    </location>
</feature>
<feature type="active site" description="Proton acceptor" evidence="1">
    <location>
        <position position="365"/>
    </location>
</feature>
<feature type="sequence conflict" description="In Ref. 1; WCJ12486." evidence="4" ref="1">
    <original>L</original>
    <variation>V</variation>
    <location>
        <position position="134"/>
    </location>
</feature>
<feature type="sequence conflict" description="In Ref. 1; WCJ12486." evidence="4" ref="1">
    <original>G</original>
    <variation>E</variation>
    <location>
        <position position="142"/>
    </location>
</feature>
<feature type="sequence conflict" description="In Ref. 1; WCJ12486." evidence="4" ref="1">
    <original>L</original>
    <variation>V</variation>
    <location>
        <position position="180"/>
    </location>
</feature>
<feature type="sequence conflict" description="In Ref. 1; WCJ12486." evidence="4" ref="1">
    <original>A</original>
    <variation>T</variation>
    <location>
        <position position="197"/>
    </location>
</feature>
<feature type="sequence conflict" description="In Ref. 1; WCJ12486." evidence="4" ref="1">
    <original>P</original>
    <variation>A</variation>
    <location>
        <position position="219"/>
    </location>
</feature>
<feature type="sequence conflict" description="In Ref. 1; WCJ12486." evidence="4" ref="1">
    <original>F</original>
    <variation>L</variation>
    <location>
        <position position="224"/>
    </location>
</feature>
<feature type="sequence conflict" description="In Ref. 1; WCJ12486." evidence="4" ref="1">
    <original>T</original>
    <variation>A</variation>
    <location>
        <position position="229"/>
    </location>
</feature>